<proteinExistence type="inferred from homology"/>
<keyword id="KW-0963">Cytoplasm</keyword>
<keyword id="KW-0378">Hydrolase</keyword>
<keyword id="KW-0694">RNA-binding</keyword>
<keyword id="KW-0820">tRNA-binding</keyword>
<organism>
    <name type="scientific">Pseudomonas putida (strain ATCC 700007 / DSM 6899 / JCM 31910 / BCRC 17059 / LMG 24140 / F1)</name>
    <dbReference type="NCBI Taxonomy" id="351746"/>
    <lineage>
        <taxon>Bacteria</taxon>
        <taxon>Pseudomonadati</taxon>
        <taxon>Pseudomonadota</taxon>
        <taxon>Gammaproteobacteria</taxon>
        <taxon>Pseudomonadales</taxon>
        <taxon>Pseudomonadaceae</taxon>
        <taxon>Pseudomonas</taxon>
    </lineage>
</organism>
<name>DTD_PSEP1</name>
<sequence length="145" mass="15659">MRGLLQRVRGARVEVAGEVVGAIDQGLLVLVAVEPEDSREQADKLLHKLLNYRVFSDEQGKMNLSLKDVGGGLLLVSQFTLAADTRNGMRPSFSTAAPPALGAELFDYLLQQAKAQHADVASGRFGADMQVHLVNDGPVTFMLQI</sequence>
<accession>A5WA61</accession>
<feature type="chain" id="PRO_1000050873" description="D-aminoacyl-tRNA deacylase">
    <location>
        <begin position="1"/>
        <end position="145"/>
    </location>
</feature>
<feature type="short sequence motif" description="Gly-cisPro motif, important for rejection of L-amino acids" evidence="1">
    <location>
        <begin position="137"/>
        <end position="138"/>
    </location>
</feature>
<comment type="function">
    <text evidence="1">An aminoacyl-tRNA editing enzyme that deacylates mischarged D-aminoacyl-tRNAs. Also deacylates mischarged glycyl-tRNA(Ala), protecting cells against glycine mischarging by AlaRS. Acts via tRNA-based rather than protein-based catalysis; rejects L-amino acids rather than detecting D-amino acids in the active site. By recycling D-aminoacyl-tRNA to D-amino acids and free tRNA molecules, this enzyme counteracts the toxicity associated with the formation of D-aminoacyl-tRNA entities in vivo and helps enforce protein L-homochirality.</text>
</comment>
<comment type="catalytic activity">
    <reaction evidence="1">
        <text>glycyl-tRNA(Ala) + H2O = tRNA(Ala) + glycine + H(+)</text>
        <dbReference type="Rhea" id="RHEA:53744"/>
        <dbReference type="Rhea" id="RHEA-COMP:9657"/>
        <dbReference type="Rhea" id="RHEA-COMP:13640"/>
        <dbReference type="ChEBI" id="CHEBI:15377"/>
        <dbReference type="ChEBI" id="CHEBI:15378"/>
        <dbReference type="ChEBI" id="CHEBI:57305"/>
        <dbReference type="ChEBI" id="CHEBI:78442"/>
        <dbReference type="ChEBI" id="CHEBI:78522"/>
        <dbReference type="EC" id="3.1.1.96"/>
    </reaction>
</comment>
<comment type="catalytic activity">
    <reaction evidence="1">
        <text>a D-aminoacyl-tRNA + H2O = a tRNA + a D-alpha-amino acid + H(+)</text>
        <dbReference type="Rhea" id="RHEA:13953"/>
        <dbReference type="Rhea" id="RHEA-COMP:10123"/>
        <dbReference type="Rhea" id="RHEA-COMP:10124"/>
        <dbReference type="ChEBI" id="CHEBI:15377"/>
        <dbReference type="ChEBI" id="CHEBI:15378"/>
        <dbReference type="ChEBI" id="CHEBI:59871"/>
        <dbReference type="ChEBI" id="CHEBI:78442"/>
        <dbReference type="ChEBI" id="CHEBI:79333"/>
        <dbReference type="EC" id="3.1.1.96"/>
    </reaction>
</comment>
<comment type="subunit">
    <text evidence="1">Homodimer.</text>
</comment>
<comment type="subcellular location">
    <subcellularLocation>
        <location evidence="1">Cytoplasm</location>
    </subcellularLocation>
</comment>
<comment type="domain">
    <text evidence="1">A Gly-cisPro motif from one monomer fits into the active site of the other monomer to allow specific chiral rejection of L-amino acids.</text>
</comment>
<comment type="similarity">
    <text evidence="1">Belongs to the DTD family.</text>
</comment>
<dbReference type="EC" id="3.1.1.96" evidence="1"/>
<dbReference type="EMBL" id="CP000712">
    <property type="protein sequence ID" value="ABQ81021.1"/>
    <property type="molecule type" value="Genomic_DNA"/>
</dbReference>
<dbReference type="SMR" id="A5WA61"/>
<dbReference type="KEGG" id="ppf:Pput_4901"/>
<dbReference type="eggNOG" id="COG1490">
    <property type="taxonomic scope" value="Bacteria"/>
</dbReference>
<dbReference type="HOGENOM" id="CLU_076901_1_1_6"/>
<dbReference type="GO" id="GO:0005737">
    <property type="term" value="C:cytoplasm"/>
    <property type="evidence" value="ECO:0007669"/>
    <property type="project" value="UniProtKB-SubCell"/>
</dbReference>
<dbReference type="GO" id="GO:0051500">
    <property type="term" value="F:D-tyrosyl-tRNA(Tyr) deacylase activity"/>
    <property type="evidence" value="ECO:0007669"/>
    <property type="project" value="TreeGrafter"/>
</dbReference>
<dbReference type="GO" id="GO:0106026">
    <property type="term" value="F:Gly-tRNA(Ala) deacylase activity"/>
    <property type="evidence" value="ECO:0007669"/>
    <property type="project" value="UniProtKB-UniRule"/>
</dbReference>
<dbReference type="GO" id="GO:0043908">
    <property type="term" value="F:Ser(Gly)-tRNA(Ala) hydrolase activity"/>
    <property type="evidence" value="ECO:0007669"/>
    <property type="project" value="UniProtKB-UniRule"/>
</dbReference>
<dbReference type="GO" id="GO:0000049">
    <property type="term" value="F:tRNA binding"/>
    <property type="evidence" value="ECO:0007669"/>
    <property type="project" value="UniProtKB-UniRule"/>
</dbReference>
<dbReference type="GO" id="GO:0019478">
    <property type="term" value="P:D-amino acid catabolic process"/>
    <property type="evidence" value="ECO:0007669"/>
    <property type="project" value="UniProtKB-UniRule"/>
</dbReference>
<dbReference type="CDD" id="cd00563">
    <property type="entry name" value="Dtyr_deacylase"/>
    <property type="match status" value="1"/>
</dbReference>
<dbReference type="FunFam" id="3.50.80.10:FF:000001">
    <property type="entry name" value="D-aminoacyl-tRNA deacylase"/>
    <property type="match status" value="1"/>
</dbReference>
<dbReference type="Gene3D" id="3.50.80.10">
    <property type="entry name" value="D-tyrosyl-tRNA(Tyr) deacylase"/>
    <property type="match status" value="1"/>
</dbReference>
<dbReference type="HAMAP" id="MF_00518">
    <property type="entry name" value="Deacylase_Dtd"/>
    <property type="match status" value="1"/>
</dbReference>
<dbReference type="InterPro" id="IPR003732">
    <property type="entry name" value="Daa-tRNA_deacyls_DTD"/>
</dbReference>
<dbReference type="InterPro" id="IPR023509">
    <property type="entry name" value="DTD-like_sf"/>
</dbReference>
<dbReference type="NCBIfam" id="TIGR00256">
    <property type="entry name" value="D-aminoacyl-tRNA deacylase"/>
    <property type="match status" value="1"/>
</dbReference>
<dbReference type="PANTHER" id="PTHR10472:SF5">
    <property type="entry name" value="D-AMINOACYL-TRNA DEACYLASE 1"/>
    <property type="match status" value="1"/>
</dbReference>
<dbReference type="PANTHER" id="PTHR10472">
    <property type="entry name" value="D-TYROSYL-TRNA TYR DEACYLASE"/>
    <property type="match status" value="1"/>
</dbReference>
<dbReference type="Pfam" id="PF02580">
    <property type="entry name" value="Tyr_Deacylase"/>
    <property type="match status" value="1"/>
</dbReference>
<dbReference type="SUPFAM" id="SSF69500">
    <property type="entry name" value="DTD-like"/>
    <property type="match status" value="1"/>
</dbReference>
<gene>
    <name evidence="1" type="primary">dtd</name>
    <name type="ordered locus">Pput_4901</name>
</gene>
<protein>
    <recommendedName>
        <fullName evidence="1">D-aminoacyl-tRNA deacylase</fullName>
        <shortName evidence="1">DTD</shortName>
        <ecNumber evidence="1">3.1.1.96</ecNumber>
    </recommendedName>
    <alternativeName>
        <fullName evidence="1">Gly-tRNA(Ala) deacylase</fullName>
    </alternativeName>
</protein>
<reference key="1">
    <citation type="submission" date="2007-05" db="EMBL/GenBank/DDBJ databases">
        <title>Complete sequence of Pseudomonas putida F1.</title>
        <authorList>
            <consortium name="US DOE Joint Genome Institute"/>
            <person name="Copeland A."/>
            <person name="Lucas S."/>
            <person name="Lapidus A."/>
            <person name="Barry K."/>
            <person name="Detter J.C."/>
            <person name="Glavina del Rio T."/>
            <person name="Hammon N."/>
            <person name="Israni S."/>
            <person name="Dalin E."/>
            <person name="Tice H."/>
            <person name="Pitluck S."/>
            <person name="Chain P."/>
            <person name="Malfatti S."/>
            <person name="Shin M."/>
            <person name="Vergez L."/>
            <person name="Schmutz J."/>
            <person name="Larimer F."/>
            <person name="Land M."/>
            <person name="Hauser L."/>
            <person name="Kyrpides N."/>
            <person name="Lykidis A."/>
            <person name="Parales R."/>
            <person name="Richardson P."/>
        </authorList>
    </citation>
    <scope>NUCLEOTIDE SEQUENCE [LARGE SCALE GENOMIC DNA]</scope>
    <source>
        <strain>ATCC 700007 / DSM 6899 / JCM 31910 / BCRC 17059 / LMG 24140 / F1</strain>
    </source>
</reference>
<evidence type="ECO:0000255" key="1">
    <source>
        <dbReference type="HAMAP-Rule" id="MF_00518"/>
    </source>
</evidence>